<organism>
    <name type="scientific">Influenza A virus (strain A/Grey teal/Australia/2/1979 H4N4)</name>
    <dbReference type="NCBI Taxonomy" id="402464"/>
    <lineage>
        <taxon>Viruses</taxon>
        <taxon>Riboviria</taxon>
        <taxon>Orthornavirae</taxon>
        <taxon>Negarnaviricota</taxon>
        <taxon>Polyploviricotina</taxon>
        <taxon>Insthoviricetes</taxon>
        <taxon>Articulavirales</taxon>
        <taxon>Orthomyxoviridae</taxon>
        <taxon>Alphainfluenzavirus</taxon>
        <taxon>Alphainfluenzavirus influenzae</taxon>
        <taxon>Influenza A virus</taxon>
    </lineage>
</organism>
<comment type="function">
    <text evidence="1">Plays an essential role in transcription initiation and cap-stealing mechanism, in which cellular capped pre-mRNAs are used to generate primers for viral transcription. Recognizes and binds the 7-methylguanosine-containing cap of the target pre-RNA which is subsequently cleaved after 10-13 nucleotides by the viral protein PA. Plays a role in the initiation of the viral genome replication and modulates the activity of the ribonucleoprotein (RNP) complex.</text>
</comment>
<comment type="subunit">
    <text evidence="1">Influenza RNA polymerase is composed of three subunits: PB1, PB2 and PA. Interacts (via N-terminus) with PB1 (via C-terminus). Interacts with nucleoprotein NP (via N-terminus).</text>
</comment>
<comment type="subcellular location">
    <subcellularLocation>
        <location evidence="1">Virion</location>
    </subcellularLocation>
    <subcellularLocation>
        <location evidence="1">Host nucleus</location>
    </subcellularLocation>
</comment>
<comment type="similarity">
    <text evidence="1">Belongs to the influenza viruses PB2 family.</text>
</comment>
<reference key="1">
    <citation type="journal article" date="2006" name="Science">
        <title>Large-scale sequence analysis of avian influenza isolates.</title>
        <authorList>
            <person name="Obenauer J.C."/>
            <person name="Denson J."/>
            <person name="Mehta P.K."/>
            <person name="Su X."/>
            <person name="Mukatira S."/>
            <person name="Finkelstein D.B."/>
            <person name="Xu X."/>
            <person name="Wang J."/>
            <person name="Ma J."/>
            <person name="Fan Y."/>
            <person name="Rakestraw K.M."/>
            <person name="Webster R.G."/>
            <person name="Hoffmann E."/>
            <person name="Krauss S."/>
            <person name="Zheng J."/>
            <person name="Zhang Z."/>
            <person name="Naeve C.W."/>
        </authorList>
    </citation>
    <scope>NUCLEOTIDE SEQUENCE [GENOMIC RNA]</scope>
</reference>
<proteinExistence type="inferred from homology"/>
<sequence length="759" mass="85880">MERIKELRDLMSQSRTREILTKTTVDHMAIIKKYTSGRQEKNPALRMKWMMAMKYPITADKRIMEMIPERNEQGQTLWSKTNDAGSDRVMVSPLAVTWWNRNGPTTSTVHYPKVYKTYFEKVERLKHGTFGPVHFRNQVKIRRRVDINPGHADLSAKEAQDVIMEVVFPNEVGARILTSESQLTITKEKKEELQDCKIAPLMVAYMLERELVRKTRFLPVAGGTSSVYIEVLHLTQGTCWEQMYTPGGEVKNDDVDQSLIIAARNIVRRATVSADPLASLLEMCHSTQIGGIRMVDILRQNPTEEQAVDICKAAMGLRISSSFSFGGFTFKRTSGSSVKKEEEVLTGNLQTLKIRVHEGYEEFTMVGRRATAILRKATRRLIQLIVSGRDEQSIAEAIIVAMVFSQEDCMIKAVRGDLNFVNRANQRLNPMHQLLRHFQKDAKVLFQSWGIEPIDNVMGMIGILPDMTPSTEMSLRGVRVSKMGVDEYSSTERVVVSIDRFLRVRDQRGNVLLSPEEVSETQGTEKLTITYSSSMMWEINGPESVLVNTYQWIIRNWETVKIQWSQDPTMLYNKMEFEPFQSLVPKAARGQYSGFVRTLFQQMRDVLGTFDTVQIIKLLPFAAAPPEQSRMQFSSLTVNVRGSGMRILVRGNSPVFNYNKATKRLTVLGKDAGALREDPDEGTAGVESAVLRGFLILGKEDKRYGPALSINELSNLAKGEKANVLIGQGDVVLVMKRKRDSSILTDSQTATKRIRMAIN</sequence>
<keyword id="KW-1157">Cap snatching</keyword>
<keyword id="KW-1262">Eukaryotic host gene expression shutoff by virus</keyword>
<keyword id="KW-1191">Eukaryotic host transcription shutoff by virus</keyword>
<keyword id="KW-1190">Host gene expression shutoff by virus</keyword>
<keyword id="KW-1048">Host nucleus</keyword>
<keyword id="KW-0945">Host-virus interaction</keyword>
<keyword id="KW-1104">Inhibition of host RNA polymerase II by virus</keyword>
<keyword id="KW-0506">mRNA capping</keyword>
<keyword id="KW-0507">mRNA processing</keyword>
<keyword id="KW-1195">Viral transcription</keyword>
<keyword id="KW-0946">Virion</keyword>
<organismHost>
    <name type="scientific">Aves</name>
    <dbReference type="NCBI Taxonomy" id="8782"/>
</organismHost>
<name>PB2_I79A7</name>
<feature type="chain" id="PRO_0000279632" description="Polymerase basic protein 2">
    <location>
        <begin position="1"/>
        <end position="759"/>
    </location>
</feature>
<feature type="short sequence motif" description="Nuclear localization signal" evidence="1">
    <location>
        <begin position="736"/>
        <end position="739"/>
    </location>
</feature>
<feature type="site" description="Avian adaptation" evidence="1">
    <location>
        <position position="627"/>
    </location>
</feature>
<gene>
    <name evidence="1" type="primary">PB2</name>
</gene>
<evidence type="ECO:0000255" key="1">
    <source>
        <dbReference type="HAMAP-Rule" id="MF_04062"/>
    </source>
</evidence>
<accession>Q20PL4</accession>
<protein>
    <recommendedName>
        <fullName evidence="1">Polymerase basic protein 2</fullName>
    </recommendedName>
    <alternativeName>
        <fullName evidence="1">RNA-directed RNA polymerase subunit P3</fullName>
    </alternativeName>
</protein>
<dbReference type="EMBL" id="CY005678">
    <property type="protein sequence ID" value="ABB20371.1"/>
    <property type="molecule type" value="Genomic_RNA"/>
</dbReference>
<dbReference type="SMR" id="Q20PL4"/>
<dbReference type="PRO" id="PR:Q20PL4"/>
<dbReference type="Proteomes" id="UP000008575">
    <property type="component" value="Genome"/>
</dbReference>
<dbReference type="GO" id="GO:0042025">
    <property type="term" value="C:host cell nucleus"/>
    <property type="evidence" value="ECO:0007669"/>
    <property type="project" value="UniProtKB-SubCell"/>
</dbReference>
<dbReference type="GO" id="GO:0044423">
    <property type="term" value="C:virion component"/>
    <property type="evidence" value="ECO:0007669"/>
    <property type="project" value="UniProtKB-UniRule"/>
</dbReference>
<dbReference type="GO" id="GO:0003723">
    <property type="term" value="F:RNA binding"/>
    <property type="evidence" value="ECO:0007669"/>
    <property type="project" value="UniProtKB-UniRule"/>
</dbReference>
<dbReference type="GO" id="GO:0003968">
    <property type="term" value="F:RNA-directed RNA polymerase activity"/>
    <property type="evidence" value="ECO:0007669"/>
    <property type="project" value="UniProtKB-UniRule"/>
</dbReference>
<dbReference type="GO" id="GO:0006370">
    <property type="term" value="P:7-methylguanosine mRNA capping"/>
    <property type="evidence" value="ECO:0007669"/>
    <property type="project" value="UniProtKB-UniRule"/>
</dbReference>
<dbReference type="GO" id="GO:0075526">
    <property type="term" value="P:cap snatching"/>
    <property type="evidence" value="ECO:0007669"/>
    <property type="project" value="UniProtKB-UniRule"/>
</dbReference>
<dbReference type="GO" id="GO:0006351">
    <property type="term" value="P:DNA-templated transcription"/>
    <property type="evidence" value="ECO:0007669"/>
    <property type="project" value="UniProtKB-UniRule"/>
</dbReference>
<dbReference type="GO" id="GO:0039657">
    <property type="term" value="P:symbiont-mediated suppression of host gene expression"/>
    <property type="evidence" value="ECO:0007669"/>
    <property type="project" value="UniProtKB-KW"/>
</dbReference>
<dbReference type="GO" id="GO:0039523">
    <property type="term" value="P:symbiont-mediated suppression of host mRNA transcription via inhibition of RNA polymerase II activity"/>
    <property type="evidence" value="ECO:0007669"/>
    <property type="project" value="UniProtKB-UniRule"/>
</dbReference>
<dbReference type="GO" id="GO:0039694">
    <property type="term" value="P:viral RNA genome replication"/>
    <property type="evidence" value="ECO:0007669"/>
    <property type="project" value="InterPro"/>
</dbReference>
<dbReference type="FunFam" id="3.30.30.90:FF:000001">
    <property type="entry name" value="Polymerase basic protein 2"/>
    <property type="match status" value="1"/>
</dbReference>
<dbReference type="Gene3D" id="3.30.30.90">
    <property type="entry name" value="Polymerase Basic Protein 2, C-terminal domain"/>
    <property type="match status" value="1"/>
</dbReference>
<dbReference type="HAMAP" id="MF_04062">
    <property type="entry name" value="INV_PB2"/>
    <property type="match status" value="1"/>
</dbReference>
<dbReference type="InterPro" id="IPR049110">
    <property type="entry name" value="Flu_PB2_2nd"/>
</dbReference>
<dbReference type="InterPro" id="IPR049114">
    <property type="entry name" value="Flu_PB2_6th"/>
</dbReference>
<dbReference type="InterPro" id="IPR049115">
    <property type="entry name" value="Flu_PB2_C"/>
</dbReference>
<dbReference type="InterPro" id="IPR048298">
    <property type="entry name" value="Flu_PB2_CAP-bd"/>
</dbReference>
<dbReference type="InterPro" id="IPR049111">
    <property type="entry name" value="Flu_PB2_middle"/>
</dbReference>
<dbReference type="InterPro" id="IPR049106">
    <property type="entry name" value="Flu_PB2_N"/>
</dbReference>
<dbReference type="InterPro" id="IPR001591">
    <property type="entry name" value="INV_PB2"/>
</dbReference>
<dbReference type="InterPro" id="IPR049113">
    <property type="entry name" value="PB2_helical"/>
</dbReference>
<dbReference type="InterPro" id="IPR037258">
    <property type="entry name" value="PDB2_C"/>
</dbReference>
<dbReference type="Pfam" id="PF20947">
    <property type="entry name" value="Flu_PB2_1st"/>
    <property type="match status" value="1"/>
</dbReference>
<dbReference type="Pfam" id="PF20948">
    <property type="entry name" value="Flu_PB2_2nd"/>
    <property type="match status" value="1"/>
</dbReference>
<dbReference type="Pfam" id="PF20949">
    <property type="entry name" value="Flu_PB2_3rd"/>
    <property type="match status" value="1"/>
</dbReference>
<dbReference type="Pfam" id="PF20950">
    <property type="entry name" value="Flu_PB2_4th"/>
    <property type="match status" value="1"/>
</dbReference>
<dbReference type="Pfam" id="PF00604">
    <property type="entry name" value="Flu_PB2_5th"/>
    <property type="match status" value="1"/>
</dbReference>
<dbReference type="Pfam" id="PF20951">
    <property type="entry name" value="Flu_PB2_6th"/>
    <property type="match status" value="1"/>
</dbReference>
<dbReference type="Pfam" id="PF20952">
    <property type="entry name" value="Flu_PB2_7th"/>
    <property type="match status" value="1"/>
</dbReference>
<dbReference type="SUPFAM" id="SSF160453">
    <property type="entry name" value="PB2 C-terminal domain-like"/>
    <property type="match status" value="1"/>
</dbReference>